<dbReference type="EMBL" id="AB016795">
    <property type="protein sequence ID" value="BAA76933.1"/>
    <property type="molecule type" value="mRNA"/>
</dbReference>
<dbReference type="EMBL" id="AB037368">
    <property type="protein sequence ID" value="BAA93087.1"/>
    <property type="molecule type" value="Genomic_DNA"/>
</dbReference>
<dbReference type="EMBL" id="BC005616">
    <property type="protein sequence ID" value="AAH05616.1"/>
    <property type="molecule type" value="mRNA"/>
</dbReference>
<dbReference type="EMBL" id="BC054395">
    <property type="protein sequence ID" value="AAH54395.1"/>
    <property type="molecule type" value="mRNA"/>
</dbReference>
<dbReference type="EMBL" id="BC063104">
    <property type="protein sequence ID" value="AAH63104.1"/>
    <property type="molecule type" value="mRNA"/>
</dbReference>
<dbReference type="CCDS" id="CCDS17382.1"/>
<dbReference type="RefSeq" id="NP_001258964.1">
    <property type="nucleotide sequence ID" value="NM_001272035.1"/>
</dbReference>
<dbReference type="RefSeq" id="NP_056543.2">
    <property type="nucleotide sequence ID" value="NM_015728.5"/>
</dbReference>
<dbReference type="BioGRID" id="197916">
    <property type="interactions" value="4"/>
</dbReference>
<dbReference type="FunCoup" id="Q99J27">
    <property type="interactions" value="1359"/>
</dbReference>
<dbReference type="STRING" id="10090.ENSMUSP00000029402"/>
<dbReference type="GlyCosmos" id="Q99J27">
    <property type="glycosylation" value="1 site, No reported glycans"/>
</dbReference>
<dbReference type="GlyGen" id="Q99J27">
    <property type="glycosylation" value="3 sites, 1 O-linked glycan (2 sites)"/>
</dbReference>
<dbReference type="iPTMnet" id="Q99J27"/>
<dbReference type="PhosphoSitePlus" id="Q99J27"/>
<dbReference type="SwissPalm" id="Q99J27"/>
<dbReference type="jPOST" id="Q99J27"/>
<dbReference type="PaxDb" id="10090-ENSMUSP00000029402"/>
<dbReference type="PeptideAtlas" id="Q99J27"/>
<dbReference type="ProteomicsDB" id="285836"/>
<dbReference type="Pumba" id="Q99J27"/>
<dbReference type="DNASU" id="11416"/>
<dbReference type="Ensembl" id="ENSMUST00000029402.15">
    <property type="protein sequence ID" value="ENSMUSP00000029402.9"/>
    <property type="gene ID" value="ENSMUSG00000027822.17"/>
</dbReference>
<dbReference type="Ensembl" id="ENSMUST00000160883.2">
    <property type="protein sequence ID" value="ENSMUSP00000125713.2"/>
    <property type="gene ID" value="ENSMUSG00000027822.17"/>
</dbReference>
<dbReference type="Ensembl" id="ENSMUST00000161659.8">
    <property type="protein sequence ID" value="ENSMUSP00000123986.2"/>
    <property type="gene ID" value="ENSMUSG00000027822.17"/>
</dbReference>
<dbReference type="GeneID" id="11416"/>
<dbReference type="KEGG" id="mmu:11416"/>
<dbReference type="UCSC" id="uc008pkd.2">
    <property type="organism name" value="mouse"/>
</dbReference>
<dbReference type="AGR" id="MGI:1332247"/>
<dbReference type="CTD" id="9197"/>
<dbReference type="MGI" id="MGI:1332247">
    <property type="gene designation" value="Slc33a1"/>
</dbReference>
<dbReference type="VEuPathDB" id="HostDB:ENSMUSG00000027822"/>
<dbReference type="eggNOG" id="KOG3574">
    <property type="taxonomic scope" value="Eukaryota"/>
</dbReference>
<dbReference type="GeneTree" id="ENSGT00940000154019"/>
<dbReference type="HOGENOM" id="CLU_020502_1_0_1"/>
<dbReference type="InParanoid" id="Q99J27"/>
<dbReference type="OMA" id="RRKSWIM"/>
<dbReference type="OrthoDB" id="6415790at2759"/>
<dbReference type="PhylomeDB" id="Q99J27"/>
<dbReference type="TreeFam" id="TF300008"/>
<dbReference type="Reactome" id="R-MMU-425397">
    <property type="pathway name" value="Transport of vitamins, nucleosides, and related molecules"/>
</dbReference>
<dbReference type="BioGRID-ORCS" id="11416">
    <property type="hits" value="16 hits in 81 CRISPR screens"/>
</dbReference>
<dbReference type="ChiTaRS" id="Slc33a1">
    <property type="organism name" value="mouse"/>
</dbReference>
<dbReference type="PRO" id="PR:Q99J27"/>
<dbReference type="Proteomes" id="UP000000589">
    <property type="component" value="Chromosome 3"/>
</dbReference>
<dbReference type="RNAct" id="Q99J27">
    <property type="molecule type" value="protein"/>
</dbReference>
<dbReference type="Bgee" id="ENSMUSG00000027822">
    <property type="expression patterns" value="Expressed in lacrimal gland and 255 other cell types or tissues"/>
</dbReference>
<dbReference type="GO" id="GO:0005789">
    <property type="term" value="C:endoplasmic reticulum membrane"/>
    <property type="evidence" value="ECO:0000250"/>
    <property type="project" value="UniProtKB"/>
</dbReference>
<dbReference type="GO" id="GO:0008521">
    <property type="term" value="F:acetyl-CoA transmembrane transporter activity"/>
    <property type="evidence" value="ECO:0000250"/>
    <property type="project" value="UniProtKB"/>
</dbReference>
<dbReference type="GO" id="GO:0042803">
    <property type="term" value="F:protein homodimerization activity"/>
    <property type="evidence" value="ECO:0007669"/>
    <property type="project" value="Ensembl"/>
</dbReference>
<dbReference type="GO" id="GO:0035348">
    <property type="term" value="P:acetyl-CoA transmembrane transport"/>
    <property type="evidence" value="ECO:0000250"/>
    <property type="project" value="UniProtKB"/>
</dbReference>
<dbReference type="FunFam" id="1.20.1250.20:FF:000287">
    <property type="entry name" value="acetyl-coenzyme A transporter 1 isoform X1"/>
    <property type="match status" value="1"/>
</dbReference>
<dbReference type="Gene3D" id="1.20.1250.20">
    <property type="entry name" value="MFS general substrate transporter like domains"/>
    <property type="match status" value="1"/>
</dbReference>
<dbReference type="InterPro" id="IPR024371">
    <property type="entry name" value="AcetylCoA_trans_1-like"/>
</dbReference>
<dbReference type="InterPro" id="IPR004752">
    <property type="entry name" value="AmpG_permease/AT-1"/>
</dbReference>
<dbReference type="InterPro" id="IPR036259">
    <property type="entry name" value="MFS_trans_sf"/>
</dbReference>
<dbReference type="PANTHER" id="PTHR12778:SF9">
    <property type="entry name" value="ACETYL-COENZYME A TRANSPORTER 1"/>
    <property type="match status" value="1"/>
</dbReference>
<dbReference type="PANTHER" id="PTHR12778">
    <property type="entry name" value="SOLUTE CARRIER FAMILY 33 ACETYL-COA TRANSPORTER -RELATED"/>
    <property type="match status" value="1"/>
</dbReference>
<dbReference type="Pfam" id="PF13000">
    <property type="entry name" value="Acatn"/>
    <property type="match status" value="2"/>
</dbReference>
<dbReference type="SUPFAM" id="SSF103473">
    <property type="entry name" value="MFS general substrate transporter"/>
    <property type="match status" value="1"/>
</dbReference>
<feature type="chain" id="PRO_0000076166" description="Acetyl-coenzyme A transporter 1">
    <location>
        <begin position="1"/>
        <end position="550"/>
    </location>
</feature>
<feature type="topological domain" description="Cytoplasmic" evidence="2">
    <location>
        <begin position="1"/>
        <end position="74"/>
    </location>
</feature>
<feature type="transmembrane region" description="Helical" evidence="2">
    <location>
        <begin position="75"/>
        <end position="95"/>
    </location>
</feature>
<feature type="topological domain" description="Extracellular" evidence="2">
    <location>
        <begin position="96"/>
        <end position="113"/>
    </location>
</feature>
<feature type="transmembrane region" description="Helical" evidence="2">
    <location>
        <begin position="114"/>
        <end position="134"/>
    </location>
</feature>
<feature type="topological domain" description="Cytoplasmic" evidence="2">
    <location>
        <begin position="135"/>
        <end position="141"/>
    </location>
</feature>
<feature type="transmembrane region" description="Helical" evidence="2">
    <location>
        <begin position="142"/>
        <end position="162"/>
    </location>
</feature>
<feature type="topological domain" description="Extracellular" evidence="2">
    <location>
        <begin position="163"/>
        <end position="175"/>
    </location>
</feature>
<feature type="transmembrane region" description="Helical" evidence="2">
    <location>
        <begin position="176"/>
        <end position="196"/>
    </location>
</feature>
<feature type="topological domain" description="Cytoplasmic" evidence="2">
    <location>
        <begin position="197"/>
        <end position="217"/>
    </location>
</feature>
<feature type="transmembrane region" description="Helical" evidence="2">
    <location>
        <begin position="218"/>
        <end position="238"/>
    </location>
</feature>
<feature type="topological domain" description="Extracellular" evidence="2">
    <location>
        <begin position="239"/>
        <end position="256"/>
    </location>
</feature>
<feature type="transmembrane region" description="Helical" evidence="2">
    <location>
        <begin position="257"/>
        <end position="277"/>
    </location>
</feature>
<feature type="topological domain" description="Cytoplasmic" evidence="2">
    <location>
        <begin position="278"/>
        <end position="300"/>
    </location>
</feature>
<feature type="transmembrane region" description="Helical" evidence="2">
    <location>
        <begin position="301"/>
        <end position="321"/>
    </location>
</feature>
<feature type="topological domain" description="Extracellular" evidence="2">
    <location>
        <begin position="322"/>
        <end position="344"/>
    </location>
</feature>
<feature type="transmembrane region" description="Helical" evidence="2">
    <location>
        <begin position="345"/>
        <end position="365"/>
    </location>
</feature>
<feature type="topological domain" description="Cytoplasmic" evidence="2">
    <location>
        <begin position="366"/>
        <end position="375"/>
    </location>
</feature>
<feature type="transmembrane region" description="Helical" evidence="2">
    <location>
        <begin position="376"/>
        <end position="396"/>
    </location>
</feature>
<feature type="topological domain" description="Extracellular" evidence="2">
    <location>
        <begin position="397"/>
        <end position="405"/>
    </location>
</feature>
<feature type="transmembrane region" description="Helical" evidence="2">
    <location>
        <begin position="406"/>
        <end position="426"/>
    </location>
</feature>
<feature type="topological domain" description="Cytoplasmic" evidence="2">
    <location>
        <begin position="427"/>
        <end position="509"/>
    </location>
</feature>
<feature type="transmembrane region" description="Helical" evidence="2">
    <location>
        <begin position="510"/>
        <end position="530"/>
    </location>
</feature>
<feature type="topological domain" description="Extracellular" evidence="2">
    <location>
        <begin position="531"/>
        <end position="550"/>
    </location>
</feature>
<feature type="region of interest" description="Disordered" evidence="3">
    <location>
        <begin position="1"/>
        <end position="58"/>
    </location>
</feature>
<feature type="compositionally biased region" description="Basic and acidic residues" evidence="3">
    <location>
        <begin position="1"/>
        <end position="12"/>
    </location>
</feature>
<feature type="compositionally biased region" description="Basic and acidic residues" evidence="3">
    <location>
        <begin position="36"/>
        <end position="52"/>
    </location>
</feature>
<feature type="modified residue" description="Phosphoserine" evidence="9 10 11">
    <location>
        <position position="42"/>
    </location>
</feature>
<feature type="glycosylation site" description="N-linked (GlcNAc...) asparagine" evidence="2">
    <location>
        <position position="103"/>
    </location>
</feature>
<feature type="mutagenesis site" description="Mice homozygous for the mutation display early developmental arrest. Heterozygous animals display a deregulated form of autophagy." evidence="6">
    <original>S</original>
    <variation>R</variation>
    <location>
        <position position="113"/>
    </location>
</feature>
<feature type="sequence conflict" description="In Ref. 1 and 2." evidence="7" ref="1 2">
    <original>VTL</original>
    <variation>GNP</variation>
    <location>
        <begin position="255"/>
        <end position="257"/>
    </location>
</feature>
<feature type="sequence conflict" description="In Ref. 1 and 2." evidence="7" ref="1 2">
    <original>LV</original>
    <variation>SL</variation>
    <location>
        <begin position="274"/>
        <end position="275"/>
    </location>
</feature>
<feature type="sequence conflict" description="In Ref. 1 and 2." evidence="7" ref="1 2">
    <original>Q</original>
    <variation>P</variation>
    <location>
        <position position="293"/>
    </location>
</feature>
<feature type="sequence conflict" description="In Ref. 1 and 2." evidence="7" ref="1 2">
    <original>V</original>
    <variation>E</variation>
    <location>
        <position position="337"/>
    </location>
</feature>
<protein>
    <recommendedName>
        <fullName>Acetyl-coenzyme A transporter 1</fullName>
        <shortName>AT-1</shortName>
        <shortName>Acetyl-CoA transporter 1</shortName>
    </recommendedName>
    <alternativeName>
        <fullName>Solute carrier family 33 member 1</fullName>
    </alternativeName>
</protein>
<accession>Q99J27</accession>
<accession>Q9WTN1</accession>
<sequence length="550" mass="61075">MSPTISHKDSSRQRRSGMFSHALDMKSGPLPPGGWDDSRRDSVGGEGDREVLLGDAGPGDLPKAPRSYRSELSSILLLLFLYVLQGIPLGLAGSIPLILQSKNVSYTDQAFFSFVFWPFSLKLLWAPLVDAVYFKNFGRRKSWLVPTQYTLGIFMIYLSTQVDRLLGNIDGRTPDVVALTVTFFLFEFLAATQDIAVDGWALTMLSRENVGYASTCNSVGQTAGYFLGNVLFLALESADFCNKYLRFQPQPRGIVTLSDFLFFWGTVFLITTTLVALLKKENREASIVKEETQGITDTYKLLFSIIKMPAVLAFCLLILTSKIGFSAADAVTGLKLVEEGVPKEHLALLAVPMVPLQIILPLLISKYTAGPQPLNIFYKAMPYRLLLGLEYALLVWWTPKVEHQGGFPLYYYIIVLLSYALHQVTLYSMYVSIMAFNAKVSDPLIGGTYMTLLNTVSNLGGNWPSTVALWLVDPLTVKECVGASNQNCRTPDAIELCKKLGGSCVTALDGYYVESIICVLIGFGWWFFLGPKFKKLQDEGPSSWKCKRNN</sequence>
<gene>
    <name type="primary">Slc33a1</name>
    <name type="synonym">Acatn</name>
</gene>
<comment type="function">
    <text evidence="1 4 6">Acetyl-CoA transporter that mediates active acetyl-CoA import through the endoplasmic reticulum (ER) membrane into the ER lumen where specific ER-based acetyl-CoA:lysine acetyltransferases are responsible for the acetylation of ER-based protein substrate, such as BACE1 (PubMed:24828632). Necessary for O-acetylation of gangliosides (PubMed:10570973).</text>
</comment>
<comment type="catalytic activity">
    <reaction evidence="5">
        <text>acetyl-CoA(in) = acetyl-CoA(out)</text>
        <dbReference type="Rhea" id="RHEA:75039"/>
        <dbReference type="ChEBI" id="CHEBI:57288"/>
    </reaction>
    <physiologicalReaction direction="left-to-right" evidence="8">
        <dbReference type="Rhea" id="RHEA:75040"/>
    </physiologicalReaction>
</comment>
<comment type="subunit">
    <text evidence="1">Homodimerizes.</text>
</comment>
<comment type="subcellular location">
    <subcellularLocation>
        <location evidence="1">Endoplasmic reticulum membrane</location>
        <topology evidence="2">Multi-pass membrane protein</topology>
    </subcellularLocation>
</comment>
<comment type="tissue specificity">
    <text evidence="4">Expressed in all adult tissues examined including brain, heart, kidney, liver and spleen, with maximum expression in liver and kidney.</text>
</comment>
<comment type="developmental stage">
    <text evidence="4">Highly expressed at day 7 of embryonic development. Detected at lower levels throughout the later stages of embryonic development.</text>
</comment>
<comment type="induction">
    <text evidence="5">Expression is induced in presence of ceramide.</text>
</comment>
<comment type="similarity">
    <text evidence="7">Belongs to the SLC33A transporter family.</text>
</comment>
<evidence type="ECO:0000250" key="1">
    <source>
        <dbReference type="UniProtKB" id="O00400"/>
    </source>
</evidence>
<evidence type="ECO:0000255" key="2"/>
<evidence type="ECO:0000256" key="3">
    <source>
        <dbReference type="SAM" id="MobiDB-lite"/>
    </source>
</evidence>
<evidence type="ECO:0000269" key="4">
    <source>
    </source>
</evidence>
<evidence type="ECO:0000269" key="5">
    <source>
    </source>
</evidence>
<evidence type="ECO:0000269" key="6">
    <source>
    </source>
</evidence>
<evidence type="ECO:0000305" key="7"/>
<evidence type="ECO:0000305" key="8">
    <source>
    </source>
</evidence>
<evidence type="ECO:0007744" key="9">
    <source>
    </source>
</evidence>
<evidence type="ECO:0007744" key="10">
    <source>
    </source>
</evidence>
<evidence type="ECO:0007744" key="11">
    <source>
    </source>
</evidence>
<proteinExistence type="evidence at protein level"/>
<name>ACATN_MOUSE</name>
<keyword id="KW-0256">Endoplasmic reticulum</keyword>
<keyword id="KW-0325">Glycoprotein</keyword>
<keyword id="KW-0472">Membrane</keyword>
<keyword id="KW-0597">Phosphoprotein</keyword>
<keyword id="KW-1185">Reference proteome</keyword>
<keyword id="KW-0812">Transmembrane</keyword>
<keyword id="KW-1133">Transmembrane helix</keyword>
<keyword id="KW-0813">Transport</keyword>
<reference key="1">
    <citation type="journal article" date="1999" name="Gene">
        <title>Cloning and characterization of a putative mouse acetyl-CoA transporter cDNA.</title>
        <authorList>
            <person name="Bora R.S."/>
            <person name="Kanamori A."/>
            <person name="Hirabayashi Y."/>
        </authorList>
    </citation>
    <scope>NUCLEOTIDE SEQUENCE [MRNA]</scope>
    <scope>FUNCTION</scope>
    <scope>DEVELOPMENTAL STAGE</scope>
    <scope>TISSUE SPECIFICITY</scope>
    <source>
        <tissue>Melanoma</tissue>
    </source>
</reference>
<reference key="2">
    <citation type="journal article" date="2000" name="FEBS Lett.">
        <title>Genomic structure and promoter analysis of putative mouse acetyl-CoA transporter gene.</title>
        <authorList>
            <person name="Bora R.S."/>
            <person name="Ichikawa S."/>
            <person name="Kanamori A."/>
            <person name="Hirabayashi Y."/>
        </authorList>
    </citation>
    <scope>NUCLEOTIDE SEQUENCE [GENOMIC DNA]</scope>
</reference>
<reference key="3">
    <citation type="journal article" date="2004" name="Genome Res.">
        <title>The status, quality, and expansion of the NIH full-length cDNA project: the Mammalian Gene Collection (MGC).</title>
        <authorList>
            <consortium name="The MGC Project Team"/>
        </authorList>
    </citation>
    <scope>NUCLEOTIDE SEQUENCE [LARGE SCALE MRNA]</scope>
    <source>
        <strain>129</strain>
        <strain>FVB/N</strain>
        <tissue>Eye</tissue>
        <tissue>Kidney</tissue>
        <tissue>Mammary tumor</tissue>
    </source>
</reference>
<reference key="4">
    <citation type="journal article" date="2007" name="Mol. Cell. Proteomics">
        <title>Mitochondrial phosphoproteome revealed by an improved IMAC method and MS/MS/MS.</title>
        <authorList>
            <person name="Lee J."/>
            <person name="Xu Y."/>
            <person name="Chen Y."/>
            <person name="Sprung R."/>
            <person name="Kim S.C."/>
            <person name="Xie S."/>
            <person name="Zhao Y."/>
        </authorList>
    </citation>
    <scope>PHOSPHORYLATION [LARGE SCALE ANALYSIS] AT SER-42</scope>
    <scope>IDENTIFICATION BY MASS SPECTROMETRY [LARGE SCALE ANALYSIS]</scope>
    <source>
        <tissue>Liver</tissue>
    </source>
</reference>
<reference key="5">
    <citation type="journal article" date="2007" name="Proc. Natl. Acad. Sci. U.S.A.">
        <title>Large-scale phosphorylation analysis of mouse liver.</title>
        <authorList>
            <person name="Villen J."/>
            <person name="Beausoleil S.A."/>
            <person name="Gerber S.A."/>
            <person name="Gygi S.P."/>
        </authorList>
    </citation>
    <scope>PHOSPHORYLATION [LARGE SCALE ANALYSIS] AT SER-42</scope>
    <scope>IDENTIFICATION BY MASS SPECTROMETRY [LARGE SCALE ANALYSIS]</scope>
    <source>
        <tissue>Liver</tissue>
    </source>
</reference>
<reference key="6">
    <citation type="journal article" date="2010" name="Cell">
        <title>A tissue-specific atlas of mouse protein phosphorylation and expression.</title>
        <authorList>
            <person name="Huttlin E.L."/>
            <person name="Jedrychowski M.P."/>
            <person name="Elias J.E."/>
            <person name="Goswami T."/>
            <person name="Rad R."/>
            <person name="Beausoleil S.A."/>
            <person name="Villen J."/>
            <person name="Haas W."/>
            <person name="Sowa M.E."/>
            <person name="Gygi S.P."/>
        </authorList>
    </citation>
    <scope>PHOSPHORYLATION [LARGE SCALE ANALYSIS] AT SER-42</scope>
    <scope>IDENTIFICATION BY MASS SPECTROMETRY [LARGE SCALE ANALYSIS]</scope>
    <source>
        <tissue>Heart</tissue>
        <tissue>Kidney</tissue>
        <tissue>Liver</tissue>
        <tissue>Lung</tissue>
        <tissue>Pancreas</tissue>
        <tissue>Spleen</tissue>
    </source>
</reference>
<reference key="7">
    <citation type="journal article" date="2010" name="J. Cell Sci.">
        <title>AT-1 is the ER membrane acetyl-CoA transporter and is essential for cell viability.</title>
        <authorList>
            <person name="Jonas M.C."/>
            <person name="Pehar M."/>
            <person name="Puglielli L."/>
        </authorList>
    </citation>
    <scope>FUNCTION</scope>
    <scope>TRANSPORTER ACTIVITY</scope>
    <scope>INDUCTION BY CERAMIDE</scope>
</reference>
<reference key="8">
    <citation type="journal article" date="2014" name="J. Neurosci.">
        <title>Deficient import of acetyl-CoA into the ER lumen causes neurodegeneration and propensity to infections, inflammation, and cancer.</title>
        <authorList>
            <person name="Peng Y."/>
            <person name="Li M."/>
            <person name="Clarkson B.D."/>
            <person name="Pehar M."/>
            <person name="Lao P.J."/>
            <person name="Hillmer A.T."/>
            <person name="Barnhart T.E."/>
            <person name="Christian B.T."/>
            <person name="Mitchell H.A."/>
            <person name="Bendlin B.B."/>
            <person name="Sandor M."/>
            <person name="Puglielli L."/>
        </authorList>
    </citation>
    <scope>FUNCTION</scope>
    <scope>TRANSPORTER ACTIVITY</scope>
    <scope>MUTAGENESIS OF SER-113</scope>
</reference>
<organism>
    <name type="scientific">Mus musculus</name>
    <name type="common">Mouse</name>
    <dbReference type="NCBI Taxonomy" id="10090"/>
    <lineage>
        <taxon>Eukaryota</taxon>
        <taxon>Metazoa</taxon>
        <taxon>Chordata</taxon>
        <taxon>Craniata</taxon>
        <taxon>Vertebrata</taxon>
        <taxon>Euteleostomi</taxon>
        <taxon>Mammalia</taxon>
        <taxon>Eutheria</taxon>
        <taxon>Euarchontoglires</taxon>
        <taxon>Glires</taxon>
        <taxon>Rodentia</taxon>
        <taxon>Myomorpha</taxon>
        <taxon>Muroidea</taxon>
        <taxon>Muridae</taxon>
        <taxon>Murinae</taxon>
        <taxon>Mus</taxon>
        <taxon>Mus</taxon>
    </lineage>
</organism>